<accession>Q5JH35</accession>
<proteinExistence type="inferred from homology"/>
<feature type="chain" id="PRO_0000125811" description="Large ribosomal subunit protein uL1">
    <location>
        <begin position="1"/>
        <end position="216"/>
    </location>
</feature>
<evidence type="ECO:0000255" key="1">
    <source>
        <dbReference type="HAMAP-Rule" id="MF_01318"/>
    </source>
</evidence>
<evidence type="ECO:0000305" key="2"/>
<reference key="1">
    <citation type="journal article" date="2005" name="Genome Res.">
        <title>Complete genome sequence of the hyperthermophilic archaeon Thermococcus kodakaraensis KOD1 and comparison with Pyrococcus genomes.</title>
        <authorList>
            <person name="Fukui T."/>
            <person name="Atomi H."/>
            <person name="Kanai T."/>
            <person name="Matsumi R."/>
            <person name="Fujiwara S."/>
            <person name="Imanaka T."/>
        </authorList>
    </citation>
    <scope>NUCLEOTIDE SEQUENCE [LARGE SCALE GENOMIC DNA]</scope>
    <source>
        <strain>ATCC BAA-918 / JCM 12380 / KOD1</strain>
    </source>
</reference>
<protein>
    <recommendedName>
        <fullName evidence="1">Large ribosomal subunit protein uL1</fullName>
    </recommendedName>
    <alternativeName>
        <fullName evidence="2">50S ribosomal protein L1</fullName>
    </alternativeName>
</protein>
<name>RL1_THEKO</name>
<keyword id="KW-1185">Reference proteome</keyword>
<keyword id="KW-0678">Repressor</keyword>
<keyword id="KW-0687">Ribonucleoprotein</keyword>
<keyword id="KW-0689">Ribosomal protein</keyword>
<keyword id="KW-0694">RNA-binding</keyword>
<keyword id="KW-0699">rRNA-binding</keyword>
<keyword id="KW-0810">Translation regulation</keyword>
<keyword id="KW-0820">tRNA-binding</keyword>
<gene>
    <name evidence="1" type="primary">rpl1</name>
    <name type="ordered locus">TK1417</name>
</gene>
<comment type="function">
    <text evidence="1">Binds directly to 23S rRNA. Probably involved in E site tRNA release.</text>
</comment>
<comment type="function">
    <text evidence="1">Protein L1 is also a translational repressor protein, it controls the translation of its operon by binding to its mRNA.</text>
</comment>
<comment type="subunit">
    <text evidence="1">Part of the 50S ribosomal subunit.</text>
</comment>
<comment type="similarity">
    <text evidence="1">Belongs to the universal ribosomal protein uL1 family.</text>
</comment>
<dbReference type="EMBL" id="AP006878">
    <property type="protein sequence ID" value="BAD85606.1"/>
    <property type="molecule type" value="Genomic_DNA"/>
</dbReference>
<dbReference type="RefSeq" id="WP_011250368.1">
    <property type="nucleotide sequence ID" value="NC_006624.1"/>
</dbReference>
<dbReference type="SMR" id="Q5JH35"/>
<dbReference type="FunCoup" id="Q5JH35">
    <property type="interactions" value="140"/>
</dbReference>
<dbReference type="STRING" id="69014.TK1417"/>
<dbReference type="EnsemblBacteria" id="BAD85606">
    <property type="protein sequence ID" value="BAD85606"/>
    <property type="gene ID" value="TK1417"/>
</dbReference>
<dbReference type="GeneID" id="78447938"/>
<dbReference type="KEGG" id="tko:TK1417"/>
<dbReference type="PATRIC" id="fig|69014.16.peg.1379"/>
<dbReference type="eggNOG" id="arCOG04289">
    <property type="taxonomic scope" value="Archaea"/>
</dbReference>
<dbReference type="HOGENOM" id="CLU_062853_4_0_2"/>
<dbReference type="InParanoid" id="Q5JH35"/>
<dbReference type="OrthoDB" id="10382at2157"/>
<dbReference type="PhylomeDB" id="Q5JH35"/>
<dbReference type="Proteomes" id="UP000000536">
    <property type="component" value="Chromosome"/>
</dbReference>
<dbReference type="GO" id="GO:0015934">
    <property type="term" value="C:large ribosomal subunit"/>
    <property type="evidence" value="ECO:0007669"/>
    <property type="project" value="InterPro"/>
</dbReference>
<dbReference type="GO" id="GO:0019843">
    <property type="term" value="F:rRNA binding"/>
    <property type="evidence" value="ECO:0007669"/>
    <property type="project" value="UniProtKB-UniRule"/>
</dbReference>
<dbReference type="GO" id="GO:0003735">
    <property type="term" value="F:structural constituent of ribosome"/>
    <property type="evidence" value="ECO:0007669"/>
    <property type="project" value="InterPro"/>
</dbReference>
<dbReference type="GO" id="GO:0000049">
    <property type="term" value="F:tRNA binding"/>
    <property type="evidence" value="ECO:0007669"/>
    <property type="project" value="UniProtKB-KW"/>
</dbReference>
<dbReference type="GO" id="GO:0006417">
    <property type="term" value="P:regulation of translation"/>
    <property type="evidence" value="ECO:0007669"/>
    <property type="project" value="UniProtKB-KW"/>
</dbReference>
<dbReference type="GO" id="GO:0006412">
    <property type="term" value="P:translation"/>
    <property type="evidence" value="ECO:0007669"/>
    <property type="project" value="UniProtKB-UniRule"/>
</dbReference>
<dbReference type="CDD" id="cd00403">
    <property type="entry name" value="Ribosomal_L1"/>
    <property type="match status" value="1"/>
</dbReference>
<dbReference type="FunFam" id="3.40.50.790:FF:000005">
    <property type="entry name" value="50S ribosomal protein L1"/>
    <property type="match status" value="1"/>
</dbReference>
<dbReference type="Gene3D" id="3.30.190.20">
    <property type="match status" value="1"/>
</dbReference>
<dbReference type="Gene3D" id="3.40.50.790">
    <property type="match status" value="1"/>
</dbReference>
<dbReference type="HAMAP" id="MF_01318_A">
    <property type="entry name" value="Ribosomal_uL1_A"/>
    <property type="match status" value="1"/>
</dbReference>
<dbReference type="InterPro" id="IPR002143">
    <property type="entry name" value="Ribosomal_uL1"/>
</dbReference>
<dbReference type="InterPro" id="IPR023674">
    <property type="entry name" value="Ribosomal_uL1-like"/>
</dbReference>
<dbReference type="InterPro" id="IPR028364">
    <property type="entry name" value="Ribosomal_uL1/biogenesis"/>
</dbReference>
<dbReference type="InterPro" id="IPR016095">
    <property type="entry name" value="Ribosomal_uL1_3-a/b-sand"/>
</dbReference>
<dbReference type="InterPro" id="IPR023669">
    <property type="entry name" value="Ribosomal_uL1_arc"/>
</dbReference>
<dbReference type="InterPro" id="IPR023673">
    <property type="entry name" value="Ribosomal_uL1_CS"/>
</dbReference>
<dbReference type="NCBIfam" id="NF003244">
    <property type="entry name" value="PRK04203.1"/>
    <property type="match status" value="1"/>
</dbReference>
<dbReference type="PANTHER" id="PTHR36427">
    <property type="entry name" value="54S RIBOSOMAL PROTEIN L1, MITOCHONDRIAL"/>
    <property type="match status" value="1"/>
</dbReference>
<dbReference type="PANTHER" id="PTHR36427:SF3">
    <property type="entry name" value="LARGE RIBOSOMAL SUBUNIT PROTEIN UL1M"/>
    <property type="match status" value="1"/>
</dbReference>
<dbReference type="Pfam" id="PF00687">
    <property type="entry name" value="Ribosomal_L1"/>
    <property type="match status" value="1"/>
</dbReference>
<dbReference type="PIRSF" id="PIRSF002155">
    <property type="entry name" value="Ribosomal_L1"/>
    <property type="match status" value="1"/>
</dbReference>
<dbReference type="SUPFAM" id="SSF56808">
    <property type="entry name" value="Ribosomal protein L1"/>
    <property type="match status" value="1"/>
</dbReference>
<dbReference type="PROSITE" id="PS01199">
    <property type="entry name" value="RIBOSOMAL_L1"/>
    <property type="match status" value="1"/>
</dbReference>
<sequence>MAFDRQKLVEAVKEAKARAKPRNFTQTVEMAVNLKDVDLRKPENRFKLEVVLPHGRGKEPKIAVIADGAVAEAAKKLGLDVISGEELEELAKSPRQARKLAKKYDFFIAAAPLMPKIGRYLGRYLGPRNKMPVVVPPTMTNLEPIVEKLKKTVRIQLKNNPVVHAPIGTEDMDDEKLAENAEAVLNAIINKLERGENQVKSVYIKTTMGPAVKVER</sequence>
<organism>
    <name type="scientific">Thermococcus kodakarensis (strain ATCC BAA-918 / JCM 12380 / KOD1)</name>
    <name type="common">Pyrococcus kodakaraensis (strain KOD1)</name>
    <dbReference type="NCBI Taxonomy" id="69014"/>
    <lineage>
        <taxon>Archaea</taxon>
        <taxon>Methanobacteriati</taxon>
        <taxon>Methanobacteriota</taxon>
        <taxon>Thermococci</taxon>
        <taxon>Thermococcales</taxon>
        <taxon>Thermococcaceae</taxon>
        <taxon>Thermococcus</taxon>
    </lineage>
</organism>